<organism>
    <name type="scientific">Wolbachia sp. subsp. Drosophila simulans (strain wRi)</name>
    <dbReference type="NCBI Taxonomy" id="66084"/>
    <lineage>
        <taxon>Bacteria</taxon>
        <taxon>Pseudomonadati</taxon>
        <taxon>Pseudomonadota</taxon>
        <taxon>Alphaproteobacteria</taxon>
        <taxon>Rickettsiales</taxon>
        <taxon>Anaplasmataceae</taxon>
        <taxon>Wolbachieae</taxon>
        <taxon>Wolbachia</taxon>
    </lineage>
</organism>
<reference key="1">
    <citation type="journal article" date="2009" name="Proc. Natl. Acad. Sci. U.S.A.">
        <title>The mosaic genome structure of the Wolbachia wRi strain infecting Drosophila simulans.</title>
        <authorList>
            <person name="Klasson L."/>
            <person name="Westberg J."/>
            <person name="Sapountzis P."/>
            <person name="Naeslund K."/>
            <person name="Lutnaes Y."/>
            <person name="Darby A.C."/>
            <person name="Veneti Z."/>
            <person name="Chen L."/>
            <person name="Braig H.R."/>
            <person name="Garrett R."/>
            <person name="Bourtzis K."/>
            <person name="Andersson S.G."/>
        </authorList>
    </citation>
    <scope>NUCLEOTIDE SEQUENCE [LARGE SCALE GENOMIC DNA]</scope>
    <source>
        <strain>wRi</strain>
    </source>
</reference>
<comment type="similarity">
    <text evidence="1">Belongs to the bacterial ribosomal protein bL34 family.</text>
</comment>
<feature type="chain" id="PRO_1000196142" description="Large ribosomal subunit protein bL34">
    <location>
        <begin position="1"/>
        <end position="44"/>
    </location>
</feature>
<protein>
    <recommendedName>
        <fullName evidence="1">Large ribosomal subunit protein bL34</fullName>
    </recommendedName>
    <alternativeName>
        <fullName evidence="2">50S ribosomal protein L34</fullName>
    </alternativeName>
</protein>
<gene>
    <name evidence="1" type="primary">rpmH</name>
    <name type="ordered locus">WRi_001900</name>
</gene>
<keyword id="KW-0687">Ribonucleoprotein</keyword>
<keyword id="KW-0689">Ribosomal protein</keyword>
<proteinExistence type="inferred from homology"/>
<sequence length="44" mass="5284">MKRTFQPKNLIRKRRHGFRSRMATRAGRKILNRRRSLGCNKLCA</sequence>
<name>RL34_WOLWR</name>
<accession>C0R5I4</accession>
<evidence type="ECO:0000255" key="1">
    <source>
        <dbReference type="HAMAP-Rule" id="MF_00391"/>
    </source>
</evidence>
<evidence type="ECO:0000305" key="2"/>
<dbReference type="EMBL" id="CP001391">
    <property type="protein sequence ID" value="ACN95026.1"/>
    <property type="molecule type" value="Genomic_DNA"/>
</dbReference>
<dbReference type="RefSeq" id="WP_006279898.1">
    <property type="nucleotide sequence ID" value="NZ_MKIF01000133.1"/>
</dbReference>
<dbReference type="SMR" id="C0R5I4"/>
<dbReference type="STRING" id="66084.WRi_001900"/>
<dbReference type="GeneID" id="70035690"/>
<dbReference type="KEGG" id="wri:WRi_001900"/>
<dbReference type="HOGENOM" id="CLU_129938_2_0_5"/>
<dbReference type="Proteomes" id="UP000001293">
    <property type="component" value="Chromosome"/>
</dbReference>
<dbReference type="GO" id="GO:1990904">
    <property type="term" value="C:ribonucleoprotein complex"/>
    <property type="evidence" value="ECO:0007669"/>
    <property type="project" value="UniProtKB-KW"/>
</dbReference>
<dbReference type="GO" id="GO:0005840">
    <property type="term" value="C:ribosome"/>
    <property type="evidence" value="ECO:0007669"/>
    <property type="project" value="UniProtKB-KW"/>
</dbReference>
<dbReference type="GO" id="GO:0003735">
    <property type="term" value="F:structural constituent of ribosome"/>
    <property type="evidence" value="ECO:0007669"/>
    <property type="project" value="InterPro"/>
</dbReference>
<dbReference type="GO" id="GO:0006412">
    <property type="term" value="P:translation"/>
    <property type="evidence" value="ECO:0007669"/>
    <property type="project" value="UniProtKB-UniRule"/>
</dbReference>
<dbReference type="FunFam" id="1.10.287.3980:FF:000001">
    <property type="entry name" value="Mitochondrial ribosomal protein L34"/>
    <property type="match status" value="1"/>
</dbReference>
<dbReference type="Gene3D" id="1.10.287.3980">
    <property type="match status" value="1"/>
</dbReference>
<dbReference type="HAMAP" id="MF_00391">
    <property type="entry name" value="Ribosomal_bL34"/>
    <property type="match status" value="1"/>
</dbReference>
<dbReference type="InterPro" id="IPR000271">
    <property type="entry name" value="Ribosomal_bL34"/>
</dbReference>
<dbReference type="InterPro" id="IPR020939">
    <property type="entry name" value="Ribosomal_bL34_CS"/>
</dbReference>
<dbReference type="NCBIfam" id="TIGR01030">
    <property type="entry name" value="rpmH_bact"/>
    <property type="match status" value="1"/>
</dbReference>
<dbReference type="PANTHER" id="PTHR14503:SF4">
    <property type="entry name" value="LARGE RIBOSOMAL SUBUNIT PROTEIN BL34M"/>
    <property type="match status" value="1"/>
</dbReference>
<dbReference type="PANTHER" id="PTHR14503">
    <property type="entry name" value="MITOCHONDRIAL RIBOSOMAL PROTEIN 34 FAMILY MEMBER"/>
    <property type="match status" value="1"/>
</dbReference>
<dbReference type="Pfam" id="PF00468">
    <property type="entry name" value="Ribosomal_L34"/>
    <property type="match status" value="1"/>
</dbReference>
<dbReference type="PROSITE" id="PS00784">
    <property type="entry name" value="RIBOSOMAL_L34"/>
    <property type="match status" value="1"/>
</dbReference>